<dbReference type="EC" id="6.3.5.-" evidence="1"/>
<dbReference type="EMBL" id="AE016879">
    <property type="protein sequence ID" value="AAP24355.1"/>
    <property type="molecule type" value="Genomic_DNA"/>
</dbReference>
<dbReference type="EMBL" id="AE017334">
    <property type="protein sequence ID" value="AAT29412.1"/>
    <property type="molecule type" value="Genomic_DNA"/>
</dbReference>
<dbReference type="EMBL" id="AE017225">
    <property type="protein sequence ID" value="AAT52638.1"/>
    <property type="molecule type" value="Genomic_DNA"/>
</dbReference>
<dbReference type="RefSeq" id="NP_842869.1">
    <property type="nucleotide sequence ID" value="NC_003997.3"/>
</dbReference>
<dbReference type="RefSeq" id="WP_001047678.1">
    <property type="nucleotide sequence ID" value="NZ_WXXJ01000007.1"/>
</dbReference>
<dbReference type="RefSeq" id="YP_026587.1">
    <property type="nucleotide sequence ID" value="NC_005945.1"/>
</dbReference>
<dbReference type="SMR" id="Q81ZE7"/>
<dbReference type="IntAct" id="Q81ZE7">
    <property type="interactions" value="2"/>
</dbReference>
<dbReference type="STRING" id="261594.GBAA_0322"/>
<dbReference type="DNASU" id="1087223"/>
<dbReference type="GeneID" id="45020378"/>
<dbReference type="KEGG" id="ban:BA_0322"/>
<dbReference type="KEGG" id="bar:GBAA_0322"/>
<dbReference type="KEGG" id="bat:BAS0307"/>
<dbReference type="PATRIC" id="fig|198094.11.peg.313"/>
<dbReference type="eggNOG" id="COG0064">
    <property type="taxonomic scope" value="Bacteria"/>
</dbReference>
<dbReference type="HOGENOM" id="CLU_019240_0_0_9"/>
<dbReference type="OMA" id="ARKWWMG"/>
<dbReference type="OrthoDB" id="9804078at2"/>
<dbReference type="Proteomes" id="UP000000427">
    <property type="component" value="Chromosome"/>
</dbReference>
<dbReference type="Proteomes" id="UP000000594">
    <property type="component" value="Chromosome"/>
</dbReference>
<dbReference type="GO" id="GO:0050566">
    <property type="term" value="F:asparaginyl-tRNA synthase (glutamine-hydrolyzing) activity"/>
    <property type="evidence" value="ECO:0007669"/>
    <property type="project" value="RHEA"/>
</dbReference>
<dbReference type="GO" id="GO:0005524">
    <property type="term" value="F:ATP binding"/>
    <property type="evidence" value="ECO:0007669"/>
    <property type="project" value="UniProtKB-KW"/>
</dbReference>
<dbReference type="GO" id="GO:0050567">
    <property type="term" value="F:glutaminyl-tRNA synthase (glutamine-hydrolyzing) activity"/>
    <property type="evidence" value="ECO:0007669"/>
    <property type="project" value="UniProtKB-UniRule"/>
</dbReference>
<dbReference type="GO" id="GO:0070681">
    <property type="term" value="P:glutaminyl-tRNAGln biosynthesis via transamidation"/>
    <property type="evidence" value="ECO:0007669"/>
    <property type="project" value="TreeGrafter"/>
</dbReference>
<dbReference type="GO" id="GO:0006412">
    <property type="term" value="P:translation"/>
    <property type="evidence" value="ECO:0007669"/>
    <property type="project" value="UniProtKB-UniRule"/>
</dbReference>
<dbReference type="FunFam" id="1.10.10.410:FF:000001">
    <property type="entry name" value="Aspartyl/glutamyl-tRNA(Asn/Gln) amidotransferase subunit B"/>
    <property type="match status" value="1"/>
</dbReference>
<dbReference type="FunFam" id="1.10.150.380:FF:000001">
    <property type="entry name" value="Aspartyl/glutamyl-tRNA(Asn/Gln) amidotransferase subunit B"/>
    <property type="match status" value="1"/>
</dbReference>
<dbReference type="Gene3D" id="1.10.10.410">
    <property type="match status" value="1"/>
</dbReference>
<dbReference type="Gene3D" id="1.10.150.380">
    <property type="entry name" value="GatB domain, N-terminal subdomain"/>
    <property type="match status" value="1"/>
</dbReference>
<dbReference type="HAMAP" id="MF_00121">
    <property type="entry name" value="GatB"/>
    <property type="match status" value="1"/>
</dbReference>
<dbReference type="InterPro" id="IPR017959">
    <property type="entry name" value="Asn/Gln-tRNA_amidoTrfase_suB/E"/>
</dbReference>
<dbReference type="InterPro" id="IPR006075">
    <property type="entry name" value="Asn/Gln-tRNA_Trfase_suB/E_cat"/>
</dbReference>
<dbReference type="InterPro" id="IPR018027">
    <property type="entry name" value="Asn/Gln_amidotransferase"/>
</dbReference>
<dbReference type="InterPro" id="IPR003789">
    <property type="entry name" value="Asn/Gln_tRNA_amidoTrase-B-like"/>
</dbReference>
<dbReference type="InterPro" id="IPR004413">
    <property type="entry name" value="GatB"/>
</dbReference>
<dbReference type="InterPro" id="IPR042114">
    <property type="entry name" value="GatB_C_1"/>
</dbReference>
<dbReference type="InterPro" id="IPR023168">
    <property type="entry name" value="GatB_Yqey_C_2"/>
</dbReference>
<dbReference type="InterPro" id="IPR017958">
    <property type="entry name" value="Gln-tRNA_amidoTrfase_suB_CS"/>
</dbReference>
<dbReference type="InterPro" id="IPR014746">
    <property type="entry name" value="Gln_synth/guanido_kin_cat_dom"/>
</dbReference>
<dbReference type="NCBIfam" id="TIGR00133">
    <property type="entry name" value="gatB"/>
    <property type="match status" value="1"/>
</dbReference>
<dbReference type="NCBIfam" id="NF004011">
    <property type="entry name" value="PRK05477.1-1"/>
    <property type="match status" value="1"/>
</dbReference>
<dbReference type="NCBIfam" id="NF004012">
    <property type="entry name" value="PRK05477.1-2"/>
    <property type="match status" value="1"/>
</dbReference>
<dbReference type="NCBIfam" id="NF004014">
    <property type="entry name" value="PRK05477.1-4"/>
    <property type="match status" value="1"/>
</dbReference>
<dbReference type="PANTHER" id="PTHR11659">
    <property type="entry name" value="GLUTAMYL-TRNA GLN AMIDOTRANSFERASE SUBUNIT B MITOCHONDRIAL AND PROKARYOTIC PET112-RELATED"/>
    <property type="match status" value="1"/>
</dbReference>
<dbReference type="PANTHER" id="PTHR11659:SF0">
    <property type="entry name" value="GLUTAMYL-TRNA(GLN) AMIDOTRANSFERASE SUBUNIT B, MITOCHONDRIAL"/>
    <property type="match status" value="1"/>
</dbReference>
<dbReference type="Pfam" id="PF02934">
    <property type="entry name" value="GatB_N"/>
    <property type="match status" value="1"/>
</dbReference>
<dbReference type="Pfam" id="PF02637">
    <property type="entry name" value="GatB_Yqey"/>
    <property type="match status" value="1"/>
</dbReference>
<dbReference type="SMART" id="SM00845">
    <property type="entry name" value="GatB_Yqey"/>
    <property type="match status" value="1"/>
</dbReference>
<dbReference type="SUPFAM" id="SSF89095">
    <property type="entry name" value="GatB/YqeY motif"/>
    <property type="match status" value="1"/>
</dbReference>
<dbReference type="SUPFAM" id="SSF55931">
    <property type="entry name" value="Glutamine synthetase/guanido kinase"/>
    <property type="match status" value="1"/>
</dbReference>
<dbReference type="PROSITE" id="PS01234">
    <property type="entry name" value="GATB"/>
    <property type="match status" value="1"/>
</dbReference>
<name>GATB_BACAN</name>
<reference key="1">
    <citation type="journal article" date="2003" name="Nature">
        <title>The genome sequence of Bacillus anthracis Ames and comparison to closely related bacteria.</title>
        <authorList>
            <person name="Read T.D."/>
            <person name="Peterson S.N."/>
            <person name="Tourasse N.J."/>
            <person name="Baillie L.W."/>
            <person name="Paulsen I.T."/>
            <person name="Nelson K.E."/>
            <person name="Tettelin H."/>
            <person name="Fouts D.E."/>
            <person name="Eisen J.A."/>
            <person name="Gill S.R."/>
            <person name="Holtzapple E.K."/>
            <person name="Okstad O.A."/>
            <person name="Helgason E."/>
            <person name="Rilstone J."/>
            <person name="Wu M."/>
            <person name="Kolonay J.F."/>
            <person name="Beanan M.J."/>
            <person name="Dodson R.J."/>
            <person name="Brinkac L.M."/>
            <person name="Gwinn M.L."/>
            <person name="DeBoy R.T."/>
            <person name="Madpu R."/>
            <person name="Daugherty S.C."/>
            <person name="Durkin A.S."/>
            <person name="Haft D.H."/>
            <person name="Nelson W.C."/>
            <person name="Peterson J.D."/>
            <person name="Pop M."/>
            <person name="Khouri H.M."/>
            <person name="Radune D."/>
            <person name="Benton J.L."/>
            <person name="Mahamoud Y."/>
            <person name="Jiang L."/>
            <person name="Hance I.R."/>
            <person name="Weidman J.F."/>
            <person name="Berry K.J."/>
            <person name="Plaut R.D."/>
            <person name="Wolf A.M."/>
            <person name="Watkins K.L."/>
            <person name="Nierman W.C."/>
            <person name="Hazen A."/>
            <person name="Cline R.T."/>
            <person name="Redmond C."/>
            <person name="Thwaite J.E."/>
            <person name="White O."/>
            <person name="Salzberg S.L."/>
            <person name="Thomason B."/>
            <person name="Friedlander A.M."/>
            <person name="Koehler T.M."/>
            <person name="Hanna P.C."/>
            <person name="Kolstoe A.-B."/>
            <person name="Fraser C.M."/>
        </authorList>
    </citation>
    <scope>NUCLEOTIDE SEQUENCE [LARGE SCALE GENOMIC DNA]</scope>
    <source>
        <strain>Ames / isolate Porton</strain>
    </source>
</reference>
<reference key="2">
    <citation type="journal article" date="2009" name="J. Bacteriol.">
        <title>The complete genome sequence of Bacillus anthracis Ames 'Ancestor'.</title>
        <authorList>
            <person name="Ravel J."/>
            <person name="Jiang L."/>
            <person name="Stanley S.T."/>
            <person name="Wilson M.R."/>
            <person name="Decker R.S."/>
            <person name="Read T.D."/>
            <person name="Worsham P."/>
            <person name="Keim P.S."/>
            <person name="Salzberg S.L."/>
            <person name="Fraser-Liggett C.M."/>
            <person name="Rasko D.A."/>
        </authorList>
    </citation>
    <scope>NUCLEOTIDE SEQUENCE [LARGE SCALE GENOMIC DNA]</scope>
    <source>
        <strain>Ames ancestor</strain>
    </source>
</reference>
<reference key="3">
    <citation type="submission" date="2004-01" db="EMBL/GenBank/DDBJ databases">
        <title>Complete genome sequence of Bacillus anthracis Sterne.</title>
        <authorList>
            <person name="Brettin T.S."/>
            <person name="Bruce D."/>
            <person name="Challacombe J.F."/>
            <person name="Gilna P."/>
            <person name="Han C."/>
            <person name="Hill K."/>
            <person name="Hitchcock P."/>
            <person name="Jackson P."/>
            <person name="Keim P."/>
            <person name="Longmire J."/>
            <person name="Lucas S."/>
            <person name="Okinaka R."/>
            <person name="Richardson P."/>
            <person name="Rubin E."/>
            <person name="Tice H."/>
        </authorList>
    </citation>
    <scope>NUCLEOTIDE SEQUENCE [LARGE SCALE GENOMIC DNA]</scope>
    <source>
        <strain>Sterne</strain>
    </source>
</reference>
<gene>
    <name evidence="1" type="primary">gatB</name>
    <name type="ordered locus">BA_0322</name>
    <name type="ordered locus">GBAA_0322</name>
    <name type="ordered locus">BAS0307</name>
</gene>
<keyword id="KW-0067">ATP-binding</keyword>
<keyword id="KW-0436">Ligase</keyword>
<keyword id="KW-0547">Nucleotide-binding</keyword>
<keyword id="KW-0648">Protein biosynthesis</keyword>
<keyword id="KW-1185">Reference proteome</keyword>
<feature type="chain" id="PRO_0000148758" description="Aspartyl/glutamyl-tRNA(Asn/Gln) amidotransferase subunit B">
    <location>
        <begin position="1"/>
        <end position="475"/>
    </location>
</feature>
<protein>
    <recommendedName>
        <fullName evidence="1">Aspartyl/glutamyl-tRNA(Asn/Gln) amidotransferase subunit B</fullName>
        <shortName evidence="1">Asp/Glu-ADT subunit B</shortName>
        <ecNumber evidence="1">6.3.5.-</ecNumber>
    </recommendedName>
</protein>
<comment type="function">
    <text evidence="1">Allows the formation of correctly charged Asn-tRNA(Asn) or Gln-tRNA(Gln) through the transamidation of misacylated Asp-tRNA(Asn) or Glu-tRNA(Gln) in organisms which lack either or both of asparaginyl-tRNA or glutaminyl-tRNA synthetases. The reaction takes place in the presence of glutamine and ATP through an activated phospho-Asp-tRNA(Asn) or phospho-Glu-tRNA(Gln).</text>
</comment>
<comment type="catalytic activity">
    <reaction evidence="1">
        <text>L-glutamyl-tRNA(Gln) + L-glutamine + ATP + H2O = L-glutaminyl-tRNA(Gln) + L-glutamate + ADP + phosphate + H(+)</text>
        <dbReference type="Rhea" id="RHEA:17521"/>
        <dbReference type="Rhea" id="RHEA-COMP:9681"/>
        <dbReference type="Rhea" id="RHEA-COMP:9684"/>
        <dbReference type="ChEBI" id="CHEBI:15377"/>
        <dbReference type="ChEBI" id="CHEBI:15378"/>
        <dbReference type="ChEBI" id="CHEBI:29985"/>
        <dbReference type="ChEBI" id="CHEBI:30616"/>
        <dbReference type="ChEBI" id="CHEBI:43474"/>
        <dbReference type="ChEBI" id="CHEBI:58359"/>
        <dbReference type="ChEBI" id="CHEBI:78520"/>
        <dbReference type="ChEBI" id="CHEBI:78521"/>
        <dbReference type="ChEBI" id="CHEBI:456216"/>
    </reaction>
</comment>
<comment type="catalytic activity">
    <reaction evidence="1">
        <text>L-aspartyl-tRNA(Asn) + L-glutamine + ATP + H2O = L-asparaginyl-tRNA(Asn) + L-glutamate + ADP + phosphate + 2 H(+)</text>
        <dbReference type="Rhea" id="RHEA:14513"/>
        <dbReference type="Rhea" id="RHEA-COMP:9674"/>
        <dbReference type="Rhea" id="RHEA-COMP:9677"/>
        <dbReference type="ChEBI" id="CHEBI:15377"/>
        <dbReference type="ChEBI" id="CHEBI:15378"/>
        <dbReference type="ChEBI" id="CHEBI:29985"/>
        <dbReference type="ChEBI" id="CHEBI:30616"/>
        <dbReference type="ChEBI" id="CHEBI:43474"/>
        <dbReference type="ChEBI" id="CHEBI:58359"/>
        <dbReference type="ChEBI" id="CHEBI:78515"/>
        <dbReference type="ChEBI" id="CHEBI:78516"/>
        <dbReference type="ChEBI" id="CHEBI:456216"/>
    </reaction>
</comment>
<comment type="subunit">
    <text evidence="1">Heterotrimer of A, B and C subunits.</text>
</comment>
<comment type="similarity">
    <text evidence="1">Belongs to the GatB/GatE family. GatB subfamily.</text>
</comment>
<evidence type="ECO:0000255" key="1">
    <source>
        <dbReference type="HAMAP-Rule" id="MF_00121"/>
    </source>
</evidence>
<proteinExistence type="inferred from homology"/>
<sequence length="475" mass="53222">MNLETIIGLEVHVELKTNSKIFSASPTEFGAEPNTQTSVIDLGYPGVLPTLNKEAVNFAMKAAMALNCEIATETKFDRKNYFYPDNPKAYQISQFDKPIGENGWIEIEVDGKKKRIGITRLHLEEDAGKSTHTADGSLVDYNRQGMPLIEIVSEPDMRTPEEAYAYLEKLKSIIQYTGVSDCKMEEGSLRCDANISLRPVGQEKFGTKAELKNLNSFTYVQKGLEHEQVRQEKELLSGGIIQQETRRYDEATKKTILMRVKEGSDDYRYFPEPDLVELYIDDAWKEEVRASIPELPDARKARYVAEIGLPAYDAHVLTLTKEMSDFFEAAIADGADAKLTSNWLMGEVLAYLNKQQKELKDVALTPAGLSKMVQLIEKGTISSKIAKKVFNELIEKGGDPEEIVKAKGLVQISDEGTLRKVVTEILDNNEQSIEDFKNGKDRAIGFLVGQIMKATKGQANPPLVNKILLEEINKR</sequence>
<organism>
    <name type="scientific">Bacillus anthracis</name>
    <dbReference type="NCBI Taxonomy" id="1392"/>
    <lineage>
        <taxon>Bacteria</taxon>
        <taxon>Bacillati</taxon>
        <taxon>Bacillota</taxon>
        <taxon>Bacilli</taxon>
        <taxon>Bacillales</taxon>
        <taxon>Bacillaceae</taxon>
        <taxon>Bacillus</taxon>
        <taxon>Bacillus cereus group</taxon>
    </lineage>
</organism>
<accession>Q81ZE7</accession>
<accession>Q6I493</accession>
<accession>Q6KXZ9</accession>